<feature type="chain" id="PRO_0000202413" description="Outer spore wall protein LDS1">
    <location>
        <begin position="1"/>
        <end position="325"/>
    </location>
</feature>
<feature type="topological domain" description="Cytoplasmic" evidence="7">
    <location>
        <begin position="1"/>
        <end position="91"/>
    </location>
</feature>
<feature type="transmembrane region" description="Helical" evidence="1">
    <location>
        <begin position="92"/>
        <end position="112"/>
    </location>
</feature>
<feature type="topological domain" description="Extracellular" evidence="7">
    <location>
        <begin position="113"/>
        <end position="118"/>
    </location>
</feature>
<feature type="transmembrane region" description="Helical" evidence="1">
    <location>
        <begin position="119"/>
        <end position="139"/>
    </location>
</feature>
<feature type="topological domain" description="Cytoplasmic" evidence="7">
    <location>
        <begin position="140"/>
        <end position="208"/>
    </location>
</feature>
<feature type="transmembrane region" description="Helical" evidence="1">
    <location>
        <begin position="209"/>
        <end position="229"/>
    </location>
</feature>
<feature type="topological domain" description="Extracellular" evidence="7">
    <location>
        <begin position="230"/>
        <end position="263"/>
    </location>
</feature>
<feature type="transmembrane region" description="Helical" evidence="1">
    <location>
        <begin position="264"/>
        <end position="284"/>
    </location>
</feature>
<feature type="topological domain" description="Cytoplasmic" evidence="2">
    <location>
        <begin position="285"/>
        <end position="325"/>
    </location>
</feature>
<evidence type="ECO:0000255" key="1"/>
<evidence type="ECO:0000269" key="2">
    <source>
    </source>
</evidence>
<evidence type="ECO:0000269" key="3">
    <source>
    </source>
</evidence>
<evidence type="ECO:0000269" key="4">
    <source>
    </source>
</evidence>
<evidence type="ECO:0000303" key="5">
    <source>
    </source>
</evidence>
<evidence type="ECO:0000305" key="6"/>
<evidence type="ECO:0000305" key="7">
    <source>
    </source>
</evidence>
<evidence type="ECO:0000305" key="8">
    <source>
    </source>
</evidence>
<evidence type="ECO:0000312" key="9">
    <source>
        <dbReference type="SGD" id="S000000016"/>
    </source>
</evidence>
<organism>
    <name type="scientific">Saccharomyces cerevisiae (strain ATCC 204508 / S288c)</name>
    <name type="common">Baker's yeast</name>
    <dbReference type="NCBI Taxonomy" id="559292"/>
    <lineage>
        <taxon>Eukaryota</taxon>
        <taxon>Fungi</taxon>
        <taxon>Dikarya</taxon>
        <taxon>Ascomycota</taxon>
        <taxon>Saccharomycotina</taxon>
        <taxon>Saccharomycetes</taxon>
        <taxon>Saccharomycetales</taxon>
        <taxon>Saccharomycetaceae</taxon>
        <taxon>Saccharomyces</taxon>
    </lineage>
</organism>
<protein>
    <recommendedName>
        <fullName evidence="8">Outer spore wall protein LDS1</fullName>
    </recommendedName>
    <alternativeName>
        <fullName evidence="5">Lipid droplets in sporulation protein 1</fullName>
    </alternativeName>
</protein>
<name>LDS1_YEAST</name>
<reference key="1">
    <citation type="journal article" date="1992" name="Yeast">
        <title>Identification of a Saccharomyces cerevisiae homolog of the SNF2 transcriptional regulator in the DNA sequence of an 8.6 kb region in the LTE1-CYS1 interval on the left arm of chromosome I.</title>
        <authorList>
            <person name="Clark M.W."/>
            <person name="Zhong W.-W."/>
            <person name="Keng T."/>
            <person name="Storms R.K."/>
            <person name="Barton A.B."/>
            <person name="Kaback D.B."/>
            <person name="Bussey H."/>
        </authorList>
    </citation>
    <scope>NUCLEOTIDE SEQUENCE [GENOMIC DNA]</scope>
    <source>
        <strain>ATCC 204511 / S288c / AB972</strain>
    </source>
</reference>
<reference key="2">
    <citation type="journal article" date="1993" name="Genome">
        <title>Sequencing of chromosome I from Saccharomyces cerevisiae: analysis of a 32 kb region between the LTE1 and SPO7 genes.</title>
        <authorList>
            <person name="Ouellette B.F.F."/>
            <person name="Clark M.W."/>
            <person name="Keng T."/>
            <person name="Storms R.K."/>
            <person name="Zhong W.-W."/>
            <person name="Zeng B."/>
            <person name="Fortin N."/>
            <person name="Delaney S."/>
            <person name="Barton A.B."/>
            <person name="Kaback D.B."/>
            <person name="Bussey H."/>
        </authorList>
    </citation>
    <scope>NUCLEOTIDE SEQUENCE [GENOMIC DNA]</scope>
    <source>
        <strain>ATCC 204511 / S288c / AB972</strain>
    </source>
</reference>
<reference key="3">
    <citation type="journal article" date="1995" name="Proc. Natl. Acad. Sci. U.S.A.">
        <title>The nucleotide sequence of chromosome I from Saccharomyces cerevisiae.</title>
        <authorList>
            <person name="Bussey H."/>
            <person name="Kaback D.B."/>
            <person name="Zhong W.-W."/>
            <person name="Vo D.H."/>
            <person name="Clark M.W."/>
            <person name="Fortin N."/>
            <person name="Hall J."/>
            <person name="Ouellette B.F.F."/>
            <person name="Keng T."/>
            <person name="Barton A.B."/>
            <person name="Su Y."/>
            <person name="Davies C.J."/>
            <person name="Storms R.K."/>
        </authorList>
    </citation>
    <scope>NUCLEOTIDE SEQUENCE [LARGE SCALE GENOMIC DNA]</scope>
    <source>
        <strain>ATCC 204508 / S288c</strain>
    </source>
</reference>
<reference key="4">
    <citation type="journal article" date="2014" name="G3 (Bethesda)">
        <title>The reference genome sequence of Saccharomyces cerevisiae: Then and now.</title>
        <authorList>
            <person name="Engel S.R."/>
            <person name="Dietrich F.S."/>
            <person name="Fisk D.G."/>
            <person name="Binkley G."/>
            <person name="Balakrishnan R."/>
            <person name="Costanzo M.C."/>
            <person name="Dwight S.S."/>
            <person name="Hitz B.C."/>
            <person name="Karra K."/>
            <person name="Nash R.S."/>
            <person name="Weng S."/>
            <person name="Wong E.D."/>
            <person name="Lloyd P."/>
            <person name="Skrzypek M.S."/>
            <person name="Miyasato S.R."/>
            <person name="Simison M."/>
            <person name="Cherry J.M."/>
        </authorList>
    </citation>
    <scope>GENOME REANNOTATION</scope>
    <source>
        <strain>ATCC 204508 / S288c</strain>
    </source>
</reference>
<reference key="5">
    <citation type="journal article" date="2006" name="Proc. Natl. Acad. Sci. U.S.A.">
        <title>A global topology map of the Saccharomyces cerevisiae membrane proteome.</title>
        <authorList>
            <person name="Kim H."/>
            <person name="Melen K."/>
            <person name="Oesterberg M."/>
            <person name="von Heijne G."/>
        </authorList>
    </citation>
    <scope>TOPOLOGY [LARGE SCALE ANALYSIS]</scope>
    <source>
        <strain>ATCC 208353 / W303-1A</strain>
    </source>
</reference>
<reference key="6">
    <citation type="journal article" date="2013" name="PLoS Genet.">
        <title>A highly redundant gene network controls assembly of the outer spore wall in S. cerevisiae.</title>
        <authorList>
            <person name="Lin C.P."/>
            <person name="Kim C."/>
            <person name="Smith S.O."/>
            <person name="Neiman A.M."/>
        </authorList>
    </citation>
    <scope>FUNCTION</scope>
    <scope>SUBCELLULAR LOCATION</scope>
    <scope>DISRUPTION PHENOTYPE</scope>
</reference>
<reference key="7">
    <citation type="journal article" date="2014" name="Eukaryot. Cell">
        <title>A visual screen of protein localization during sporulation identifies new components of prospore membrane-associated complexes in budding yeast.</title>
        <authorList>
            <person name="Lam C."/>
            <person name="Santore E."/>
            <person name="Lavoie E."/>
            <person name="Needleman L."/>
            <person name="Fiacco N."/>
            <person name="Kim C."/>
            <person name="Neiman A.M."/>
        </authorList>
    </citation>
    <scope>SUBCELLULAR LOCATION</scope>
</reference>
<comment type="function">
    <text evidence="3">Involved in spore wall assembly.</text>
</comment>
<comment type="subcellular location">
    <subcellularLocation>
        <location evidence="3">Prospore membrane</location>
        <topology evidence="1">Multi-pass membrane protein</topology>
    </subcellularLocation>
    <subcellularLocation>
        <location evidence="4">Lipid droplet</location>
    </subcellularLocation>
    <subcellularLocation>
        <location evidence="3">Spore wall</location>
    </subcellularLocation>
    <text evidence="3 4">Localizes to the ascal side of growing prospore membranes in mid-meiosis II and to the spore wall in post-meiotic cells. Localizes to a specific subset of lipid droplets associated with the exterior surface of the spore throughout spore wall formation.</text>
</comment>
<comment type="disruption phenotype">
    <text evidence="3">A combined deletion of the LDS proteins RRT8, LDS1 and LDS2 fails to incorporate dityrosine and another yet uncharacterized component in the outer spore wall.</text>
</comment>
<comment type="similarity">
    <text evidence="6">Belongs to the LDS family.</text>
</comment>
<proteinExistence type="evidence at protein level"/>
<dbReference type="EMBL" id="L05146">
    <property type="protein sequence ID" value="AAC04939.1"/>
    <property type="molecule type" value="Genomic_DNA"/>
</dbReference>
<dbReference type="EMBL" id="BK006935">
    <property type="protein sequence ID" value="DAA06970.1"/>
    <property type="molecule type" value="Genomic_DNA"/>
</dbReference>
<dbReference type="PIR" id="S36731">
    <property type="entry name" value="S36731"/>
</dbReference>
<dbReference type="RefSeq" id="NP_009384.1">
    <property type="nucleotide sequence ID" value="NM_001178163.1"/>
</dbReference>
<dbReference type="BioGRID" id="31748">
    <property type="interactions" value="66"/>
</dbReference>
<dbReference type="DIP" id="DIP-2881N"/>
<dbReference type="FunCoup" id="P31379">
    <property type="interactions" value="101"/>
</dbReference>
<dbReference type="IntAct" id="P31379">
    <property type="interactions" value="8"/>
</dbReference>
<dbReference type="MINT" id="P31379"/>
<dbReference type="STRING" id="4932.YAL018C"/>
<dbReference type="TCDB" id="2.A.121.2.1">
    <property type="family name" value="the sulfate transporter (cysz) family"/>
</dbReference>
<dbReference type="PaxDb" id="4932-YAL018C"/>
<dbReference type="PeptideAtlas" id="P31379"/>
<dbReference type="EnsemblFungi" id="YAL018C_mRNA">
    <property type="protein sequence ID" value="YAL018C"/>
    <property type="gene ID" value="YAL018C"/>
</dbReference>
<dbReference type="GeneID" id="851215"/>
<dbReference type="KEGG" id="sce:YAL018C"/>
<dbReference type="AGR" id="SGD:S000000016"/>
<dbReference type="SGD" id="S000000016">
    <property type="gene designation" value="LDS1"/>
</dbReference>
<dbReference type="VEuPathDB" id="FungiDB:YAL018C"/>
<dbReference type="eggNOG" id="ENOG502QTNH">
    <property type="taxonomic scope" value="Eukaryota"/>
</dbReference>
<dbReference type="HOGENOM" id="CLU_062645_2_1_1"/>
<dbReference type="InParanoid" id="P31379"/>
<dbReference type="OMA" id="YWATITP"/>
<dbReference type="OrthoDB" id="10012223at2759"/>
<dbReference type="BioCyc" id="YEAST:G3O-28830-MONOMER"/>
<dbReference type="BioGRID-ORCS" id="851215">
    <property type="hits" value="4 hits in 10 CRISPR screens"/>
</dbReference>
<dbReference type="PRO" id="PR:P31379"/>
<dbReference type="Proteomes" id="UP000002311">
    <property type="component" value="Chromosome I"/>
</dbReference>
<dbReference type="RNAct" id="P31379">
    <property type="molecule type" value="protein"/>
</dbReference>
<dbReference type="GO" id="GO:0005619">
    <property type="term" value="C:ascospore wall"/>
    <property type="evidence" value="ECO:0000314"/>
    <property type="project" value="SGD"/>
</dbReference>
<dbReference type="GO" id="GO:0005811">
    <property type="term" value="C:lipid droplet"/>
    <property type="evidence" value="ECO:0007005"/>
    <property type="project" value="SGD"/>
</dbReference>
<dbReference type="GO" id="GO:0005628">
    <property type="term" value="C:prospore membrane"/>
    <property type="evidence" value="ECO:0000314"/>
    <property type="project" value="SGD"/>
</dbReference>
<dbReference type="GO" id="GO:0030476">
    <property type="term" value="P:ascospore wall assembly"/>
    <property type="evidence" value="ECO:0000316"/>
    <property type="project" value="SGD"/>
</dbReference>
<dbReference type="InterPro" id="IPR052786">
    <property type="entry name" value="Spore_wall_assembly"/>
</dbReference>
<dbReference type="PANTHER" id="PTHR34292">
    <property type="entry name" value="OUTER SPORE WALL PROTEIN LDS1"/>
    <property type="match status" value="1"/>
</dbReference>
<dbReference type="PANTHER" id="PTHR34292:SF2">
    <property type="entry name" value="OUTER SPORE WALL PROTEIN LDS1"/>
    <property type="match status" value="1"/>
</dbReference>
<sequence length="325" mass="37050">MSFTGSLALAGIGGLVYKFGGGQSYEKLPYVNIPFNQYLDKVYKKHFSKVMSRTRYVLMNFFKDAFTGGAFMYPFKGFLEFNTNKSSYSTTMLGILSSYLIMFALVSFVYWATITPMYTAFLIVLGPIGLFIAIFHSFLQANVFTLLFMRLSHFNNHLVEVCLEKNGLEENLSEVKPIKYYAPINSIYFWAYYFPFKLVKYMLGLSVLFVLLVISFFPLIGPILFHILISPFITQIYFTKVLRLQNFDNIQRRENIYLHAGQYASFGFLAGLIESVPILAGFAISTNTIGSVLFNLDHPMVPENLVETQAEIEAAPQDINQQPNQ</sequence>
<accession>P31379</accession>
<accession>D6VPK0</accession>
<keyword id="KW-0551">Lipid droplet</keyword>
<keyword id="KW-0472">Membrane</keyword>
<keyword id="KW-1185">Reference proteome</keyword>
<keyword id="KW-0749">Sporulation</keyword>
<keyword id="KW-0812">Transmembrane</keyword>
<keyword id="KW-1133">Transmembrane helix</keyword>
<gene>
    <name evidence="5" type="primary">LDS1</name>
    <name evidence="9" type="ordered locus">YAL018C</name>
    <name type="ORF">YAL003</name>
</gene>